<evidence type="ECO:0000256" key="1">
    <source>
        <dbReference type="SAM" id="MobiDB-lite"/>
    </source>
</evidence>
<organismHost>
    <name type="scientific">Lepidoptera</name>
    <name type="common">butterflies and moths</name>
    <dbReference type="NCBI Taxonomy" id="7088"/>
</organismHost>
<proteinExistence type="predicted"/>
<organism>
    <name type="scientific">Autographa californica nuclear polyhedrosis virus</name>
    <name type="common">AcMNPV</name>
    <dbReference type="NCBI Taxonomy" id="46015"/>
    <lineage>
        <taxon>Viruses</taxon>
        <taxon>Viruses incertae sedis</taxon>
        <taxon>Naldaviricetes</taxon>
        <taxon>Lefavirales</taxon>
        <taxon>Baculoviridae</taxon>
        <taxon>Alphabaculovirus</taxon>
        <taxon>Alphabaculovirus aucalifornicae</taxon>
    </lineage>
</organism>
<dbReference type="EMBL" id="L22858">
    <property type="protein sequence ID" value="AAA66721.1"/>
    <property type="molecule type" value="Genomic_DNA"/>
</dbReference>
<dbReference type="PIR" id="D72861">
    <property type="entry name" value="D72861"/>
</dbReference>
<dbReference type="RefSeq" id="NP_054121.1">
    <property type="nucleotide sequence ID" value="NC_001623.1"/>
</dbReference>
<dbReference type="SMR" id="P41479"/>
<dbReference type="GeneID" id="1403924"/>
<dbReference type="KEGG" id="vg:1403924"/>
<dbReference type="OrthoDB" id="21397at10239"/>
<dbReference type="Proteomes" id="UP000008292">
    <property type="component" value="Segment"/>
</dbReference>
<dbReference type="InterPro" id="IPR020151">
    <property type="entry name" value="DUF5478"/>
</dbReference>
<dbReference type="Pfam" id="PF17572">
    <property type="entry name" value="DUF5478"/>
    <property type="match status" value="1"/>
</dbReference>
<dbReference type="PRINTS" id="PR01217">
    <property type="entry name" value="PRICHEXTENSN"/>
</dbReference>
<name>Y091_NPVAC</name>
<keyword id="KW-1185">Reference proteome</keyword>
<protein>
    <recommendedName>
        <fullName>Uncharacterized 24.1 kDa protein in LEF4-P33 intergenic region</fullName>
    </recommendedName>
</protein>
<accession>P41479</accession>
<sequence length="224" mass="24138">MWYIIVIIIIIIILNLFIIILLTLKILDDIQELYPNPPIVPPPTSPPIVPLPTPPPTPTPSPPSPTPPPTPIPPTPTPTPPPTPIPPTPTPTPPPSPIPPTPTPSPPPSPIPPTPTPSPPPSPIPPTPTPSPPPSPSPLGEPMYYPSNIDTNEALINFLRPLCATDRTRATYAVPWNCNGIFHCNYFSIPFYILSCHNNAYSFVNDGCIDFNSSDCPLYPLNVL</sequence>
<feature type="chain" id="PRO_0000133025" description="Uncharacterized 24.1 kDa protein in LEF4-P33 intergenic region">
    <location>
        <begin position="1"/>
        <end position="224"/>
    </location>
</feature>
<feature type="region of interest" description="Disordered" evidence="1">
    <location>
        <begin position="44"/>
        <end position="145"/>
    </location>
</feature>
<feature type="compositionally biased region" description="Pro residues" evidence="1">
    <location>
        <begin position="44"/>
        <end position="139"/>
    </location>
</feature>
<reference key="1">
    <citation type="journal article" date="1994" name="Virology">
        <title>The complete DNA sequence of Autographa californica nuclear polyhedrosis virus.</title>
        <authorList>
            <person name="Ayres M.D."/>
            <person name="Howard S.C."/>
            <person name="Kuzio J."/>
            <person name="Lopez-Ferber M."/>
            <person name="Possee R.D."/>
        </authorList>
    </citation>
    <scope>NUCLEOTIDE SEQUENCE [LARGE SCALE GENOMIC DNA]</scope>
    <source>
        <strain>C6</strain>
    </source>
</reference>